<comment type="function">
    <text evidence="1">Part of the ABC transporter complex PstSACB involved in phosphate import. Responsible for energy coupling to the transport system.</text>
</comment>
<comment type="catalytic activity">
    <reaction evidence="1">
        <text>phosphate(out) + ATP + H2O = ADP + 2 phosphate(in) + H(+)</text>
        <dbReference type="Rhea" id="RHEA:24440"/>
        <dbReference type="ChEBI" id="CHEBI:15377"/>
        <dbReference type="ChEBI" id="CHEBI:15378"/>
        <dbReference type="ChEBI" id="CHEBI:30616"/>
        <dbReference type="ChEBI" id="CHEBI:43474"/>
        <dbReference type="ChEBI" id="CHEBI:456216"/>
        <dbReference type="EC" id="7.3.2.1"/>
    </reaction>
</comment>
<comment type="subunit">
    <text evidence="1">The complex is composed of two ATP-binding proteins (PstB), two transmembrane proteins (PstC and PstA) and a solute-binding protein (PstS).</text>
</comment>
<comment type="subcellular location">
    <subcellularLocation>
        <location evidence="1">Cell inner membrane</location>
        <topology evidence="1">Peripheral membrane protein</topology>
    </subcellularLocation>
</comment>
<comment type="similarity">
    <text evidence="1">Belongs to the ABC transporter superfamily. Phosphate importer (TC 3.A.1.7) family.</text>
</comment>
<protein>
    <recommendedName>
        <fullName evidence="1">Phosphate import ATP-binding protein PstB 2</fullName>
        <ecNumber evidence="1">7.3.2.1</ecNumber>
    </recommendedName>
    <alternativeName>
        <fullName evidence="1">ABC phosphate transporter 2</fullName>
    </alternativeName>
    <alternativeName>
        <fullName evidence="1">Phosphate-transporting ATPase 2</fullName>
    </alternativeName>
</protein>
<evidence type="ECO:0000255" key="1">
    <source>
        <dbReference type="HAMAP-Rule" id="MF_01702"/>
    </source>
</evidence>
<name>PSTB2_NITOC</name>
<reference key="1">
    <citation type="journal article" date="2006" name="Appl. Environ. Microbiol.">
        <title>Complete genome sequence of the marine, chemolithoautotrophic, ammonia-oxidizing bacterium Nitrosococcus oceani ATCC 19707.</title>
        <authorList>
            <person name="Klotz M.G."/>
            <person name="Arp D.J."/>
            <person name="Chain P.S.G."/>
            <person name="El-Sheikh A.F."/>
            <person name="Hauser L.J."/>
            <person name="Hommes N.G."/>
            <person name="Larimer F.W."/>
            <person name="Malfatti S.A."/>
            <person name="Norton J.M."/>
            <person name="Poret-Peterson A.T."/>
            <person name="Vergez L.M."/>
            <person name="Ward B.B."/>
        </authorList>
    </citation>
    <scope>NUCLEOTIDE SEQUENCE [LARGE SCALE GENOMIC DNA]</scope>
    <source>
        <strain>ATCC 19707 / BCRC 17464 / JCM 30415 / NCIMB 11848 / C-107</strain>
    </source>
</reference>
<accession>Q3J8J2</accession>
<proteinExistence type="inferred from homology"/>
<gene>
    <name evidence="1" type="primary">pstB2</name>
    <name type="ordered locus">Noc_2396</name>
</gene>
<sequence>MNQETHDKTPRTHGMDISLIERGVKKLKLKDETCCLQVKQFNFYYNQHTQALKSINLIIPERRVTAFIGPSGCGKSTLLRCFNRMNDLIDGARIEGEMLLNKQDIYGKNVNVSDLRRRVGMVFQKPNPFPKSIYENVAYGLRLQGVKSRRTLDKVVEKSLRSAALWDEVKDRLDDNAVGLSGGQQQRLVIARAIAIEPEVLLLDEPASALDPISTLKIEELIYDLKDKYTIVIVTHNMQQAARVSDYTAFMYLGELIEFGDTGTLFTNPKKKQTEDYITGRYG</sequence>
<dbReference type="EC" id="7.3.2.1" evidence="1"/>
<dbReference type="EMBL" id="CP000127">
    <property type="protein sequence ID" value="ABA58854.1"/>
    <property type="molecule type" value="Genomic_DNA"/>
</dbReference>
<dbReference type="SMR" id="Q3J8J2"/>
<dbReference type="FunCoup" id="Q3J8J2">
    <property type="interactions" value="361"/>
</dbReference>
<dbReference type="STRING" id="323261.Noc_2396"/>
<dbReference type="KEGG" id="noc:Noc_2396"/>
<dbReference type="eggNOG" id="COG1117">
    <property type="taxonomic scope" value="Bacteria"/>
</dbReference>
<dbReference type="HOGENOM" id="CLU_000604_1_22_6"/>
<dbReference type="InParanoid" id="Q3J8J2"/>
<dbReference type="Proteomes" id="UP000006838">
    <property type="component" value="Chromosome"/>
</dbReference>
<dbReference type="GO" id="GO:0005886">
    <property type="term" value="C:plasma membrane"/>
    <property type="evidence" value="ECO:0007669"/>
    <property type="project" value="UniProtKB-SubCell"/>
</dbReference>
<dbReference type="GO" id="GO:0005524">
    <property type="term" value="F:ATP binding"/>
    <property type="evidence" value="ECO:0007669"/>
    <property type="project" value="UniProtKB-KW"/>
</dbReference>
<dbReference type="GO" id="GO:0016887">
    <property type="term" value="F:ATP hydrolysis activity"/>
    <property type="evidence" value="ECO:0007669"/>
    <property type="project" value="InterPro"/>
</dbReference>
<dbReference type="GO" id="GO:0015415">
    <property type="term" value="F:ATPase-coupled phosphate ion transmembrane transporter activity"/>
    <property type="evidence" value="ECO:0007669"/>
    <property type="project" value="UniProtKB-EC"/>
</dbReference>
<dbReference type="GO" id="GO:0035435">
    <property type="term" value="P:phosphate ion transmembrane transport"/>
    <property type="evidence" value="ECO:0007669"/>
    <property type="project" value="InterPro"/>
</dbReference>
<dbReference type="CDD" id="cd03260">
    <property type="entry name" value="ABC_PstB_phosphate_transporter"/>
    <property type="match status" value="1"/>
</dbReference>
<dbReference type="FunFam" id="3.40.50.300:FF:000132">
    <property type="entry name" value="Phosphate import ATP-binding protein PstB"/>
    <property type="match status" value="1"/>
</dbReference>
<dbReference type="Gene3D" id="3.40.50.300">
    <property type="entry name" value="P-loop containing nucleotide triphosphate hydrolases"/>
    <property type="match status" value="1"/>
</dbReference>
<dbReference type="InterPro" id="IPR003593">
    <property type="entry name" value="AAA+_ATPase"/>
</dbReference>
<dbReference type="InterPro" id="IPR003439">
    <property type="entry name" value="ABC_transporter-like_ATP-bd"/>
</dbReference>
<dbReference type="InterPro" id="IPR017871">
    <property type="entry name" value="ABC_transporter-like_CS"/>
</dbReference>
<dbReference type="InterPro" id="IPR027417">
    <property type="entry name" value="P-loop_NTPase"/>
</dbReference>
<dbReference type="InterPro" id="IPR005670">
    <property type="entry name" value="PstB-like"/>
</dbReference>
<dbReference type="NCBIfam" id="TIGR00972">
    <property type="entry name" value="3a0107s01c2"/>
    <property type="match status" value="1"/>
</dbReference>
<dbReference type="PANTHER" id="PTHR43423">
    <property type="entry name" value="ABC TRANSPORTER I FAMILY MEMBER 17"/>
    <property type="match status" value="1"/>
</dbReference>
<dbReference type="PANTHER" id="PTHR43423:SF12">
    <property type="entry name" value="IRON EXPORT ATP-BINDING PROTEIN FETA-RELATED"/>
    <property type="match status" value="1"/>
</dbReference>
<dbReference type="Pfam" id="PF00005">
    <property type="entry name" value="ABC_tran"/>
    <property type="match status" value="1"/>
</dbReference>
<dbReference type="SMART" id="SM00382">
    <property type="entry name" value="AAA"/>
    <property type="match status" value="1"/>
</dbReference>
<dbReference type="SUPFAM" id="SSF52540">
    <property type="entry name" value="P-loop containing nucleoside triphosphate hydrolases"/>
    <property type="match status" value="1"/>
</dbReference>
<dbReference type="PROSITE" id="PS00211">
    <property type="entry name" value="ABC_TRANSPORTER_1"/>
    <property type="match status" value="1"/>
</dbReference>
<dbReference type="PROSITE" id="PS50893">
    <property type="entry name" value="ABC_TRANSPORTER_2"/>
    <property type="match status" value="1"/>
</dbReference>
<dbReference type="PROSITE" id="PS51238">
    <property type="entry name" value="PSTB"/>
    <property type="match status" value="1"/>
</dbReference>
<organism>
    <name type="scientific">Nitrosococcus oceani (strain ATCC 19707 / BCRC 17464 / JCM 30415 / NCIMB 11848 / C-107)</name>
    <dbReference type="NCBI Taxonomy" id="323261"/>
    <lineage>
        <taxon>Bacteria</taxon>
        <taxon>Pseudomonadati</taxon>
        <taxon>Pseudomonadota</taxon>
        <taxon>Gammaproteobacteria</taxon>
        <taxon>Chromatiales</taxon>
        <taxon>Chromatiaceae</taxon>
        <taxon>Nitrosococcus</taxon>
    </lineage>
</organism>
<feature type="chain" id="PRO_0000272485" description="Phosphate import ATP-binding protein PstB 2">
    <location>
        <begin position="1"/>
        <end position="283"/>
    </location>
</feature>
<feature type="domain" description="ABC transporter" evidence="1">
    <location>
        <begin position="36"/>
        <end position="278"/>
    </location>
</feature>
<feature type="binding site" evidence="1">
    <location>
        <begin position="69"/>
        <end position="76"/>
    </location>
    <ligand>
        <name>ATP</name>
        <dbReference type="ChEBI" id="CHEBI:30616"/>
    </ligand>
</feature>
<keyword id="KW-0067">ATP-binding</keyword>
<keyword id="KW-0997">Cell inner membrane</keyword>
<keyword id="KW-1003">Cell membrane</keyword>
<keyword id="KW-0472">Membrane</keyword>
<keyword id="KW-0547">Nucleotide-binding</keyword>
<keyword id="KW-0592">Phosphate transport</keyword>
<keyword id="KW-1185">Reference proteome</keyword>
<keyword id="KW-1278">Translocase</keyword>
<keyword id="KW-0813">Transport</keyword>